<reference key="1">
    <citation type="journal article" date="1995" name="FEBS Lett.">
        <title>A mitochondrial elongation factor-like protein is over-expressed in tumours and differentially expressed in normal tissues.</title>
        <authorList>
            <person name="Wells J."/>
            <person name="Henkler F."/>
            <person name="Leversha M."/>
            <person name="Koshy R."/>
        </authorList>
    </citation>
    <scope>NUCLEOTIDE SEQUENCE [MRNA]</scope>
    <source>
        <tissue>Liver</tissue>
    </source>
</reference>
<reference key="2">
    <citation type="journal article" date="2004" name="Nature">
        <title>The sequence and analysis of duplication-rich human chromosome 16.</title>
        <authorList>
            <person name="Martin J."/>
            <person name="Han C."/>
            <person name="Gordon L.A."/>
            <person name="Terry A."/>
            <person name="Prabhakar S."/>
            <person name="She X."/>
            <person name="Xie G."/>
            <person name="Hellsten U."/>
            <person name="Chan Y.M."/>
            <person name="Altherr M."/>
            <person name="Couronne O."/>
            <person name="Aerts A."/>
            <person name="Bajorek E."/>
            <person name="Black S."/>
            <person name="Blumer H."/>
            <person name="Branscomb E."/>
            <person name="Brown N.C."/>
            <person name="Bruno W.J."/>
            <person name="Buckingham J.M."/>
            <person name="Callen D.F."/>
            <person name="Campbell C.S."/>
            <person name="Campbell M.L."/>
            <person name="Campbell E.W."/>
            <person name="Caoile C."/>
            <person name="Challacombe J.F."/>
            <person name="Chasteen L.A."/>
            <person name="Chertkov O."/>
            <person name="Chi H.C."/>
            <person name="Christensen M."/>
            <person name="Clark L.M."/>
            <person name="Cohn J.D."/>
            <person name="Denys M."/>
            <person name="Detter J.C."/>
            <person name="Dickson M."/>
            <person name="Dimitrijevic-Bussod M."/>
            <person name="Escobar J."/>
            <person name="Fawcett J.J."/>
            <person name="Flowers D."/>
            <person name="Fotopulos D."/>
            <person name="Glavina T."/>
            <person name="Gomez M."/>
            <person name="Gonzales E."/>
            <person name="Goodstein D."/>
            <person name="Goodwin L.A."/>
            <person name="Grady D.L."/>
            <person name="Grigoriev I."/>
            <person name="Groza M."/>
            <person name="Hammon N."/>
            <person name="Hawkins T."/>
            <person name="Haydu L."/>
            <person name="Hildebrand C.E."/>
            <person name="Huang W."/>
            <person name="Israni S."/>
            <person name="Jett J."/>
            <person name="Jewett P.B."/>
            <person name="Kadner K."/>
            <person name="Kimball H."/>
            <person name="Kobayashi A."/>
            <person name="Krawczyk M.-C."/>
            <person name="Leyba T."/>
            <person name="Longmire J.L."/>
            <person name="Lopez F."/>
            <person name="Lou Y."/>
            <person name="Lowry S."/>
            <person name="Ludeman T."/>
            <person name="Manohar C.F."/>
            <person name="Mark G.A."/>
            <person name="McMurray K.L."/>
            <person name="Meincke L.J."/>
            <person name="Morgan J."/>
            <person name="Moyzis R.K."/>
            <person name="Mundt M.O."/>
            <person name="Munk A.C."/>
            <person name="Nandkeshwar R.D."/>
            <person name="Pitluck S."/>
            <person name="Pollard M."/>
            <person name="Predki P."/>
            <person name="Parson-Quintana B."/>
            <person name="Ramirez L."/>
            <person name="Rash S."/>
            <person name="Retterer J."/>
            <person name="Ricke D.O."/>
            <person name="Robinson D.L."/>
            <person name="Rodriguez A."/>
            <person name="Salamov A."/>
            <person name="Saunders E.H."/>
            <person name="Scott D."/>
            <person name="Shough T."/>
            <person name="Stallings R.L."/>
            <person name="Stalvey M."/>
            <person name="Sutherland R.D."/>
            <person name="Tapia R."/>
            <person name="Tesmer J.G."/>
            <person name="Thayer N."/>
            <person name="Thompson L.S."/>
            <person name="Tice H."/>
            <person name="Torney D.C."/>
            <person name="Tran-Gyamfi M."/>
            <person name="Tsai M."/>
            <person name="Ulanovsky L.E."/>
            <person name="Ustaszewska A."/>
            <person name="Vo N."/>
            <person name="White P.S."/>
            <person name="Williams A.L."/>
            <person name="Wills P.L."/>
            <person name="Wu J.-R."/>
            <person name="Wu K."/>
            <person name="Yang J."/>
            <person name="DeJong P."/>
            <person name="Bruce D."/>
            <person name="Doggett N.A."/>
            <person name="Deaven L."/>
            <person name="Schmutz J."/>
            <person name="Grimwood J."/>
            <person name="Richardson P."/>
            <person name="Rokhsar D.S."/>
            <person name="Eichler E.E."/>
            <person name="Gilna P."/>
            <person name="Lucas S.M."/>
            <person name="Myers R.M."/>
            <person name="Rubin E.M."/>
            <person name="Pennacchio L.A."/>
        </authorList>
    </citation>
    <scope>NUCLEOTIDE SEQUENCE [LARGE SCALE GENOMIC DNA]</scope>
</reference>
<reference key="3">
    <citation type="journal article" date="2004" name="Genome Res.">
        <title>The status, quality, and expansion of the NIH full-length cDNA project: the Mammalian Gene Collection (MGC).</title>
        <authorList>
            <consortium name="The MGC Project Team"/>
        </authorList>
    </citation>
    <scope>NUCLEOTIDE SEQUENCE [LARGE SCALE MRNA]</scope>
    <source>
        <tissue>Lung</tissue>
        <tissue>Placenta</tissue>
    </source>
</reference>
<reference key="4">
    <citation type="journal article" date="1995" name="Biochim. Biophys. Acta">
        <title>Cloning, sequence analysis and expression of mammalian mitochondrial protein synthesis elongation factor Tu.</title>
        <authorList>
            <person name="Woriax V.L."/>
            <person name="Burkhart W.A."/>
            <person name="Spremulli L.L."/>
        </authorList>
    </citation>
    <scope>NUCLEOTIDE SEQUENCE [MRNA] OF 2-455</scope>
    <source>
        <tissue>Liver</tissue>
    </source>
</reference>
<reference key="5">
    <citation type="journal article" date="1997" name="Gene">
        <title>The human mitochondrial elongation factor Tu (EF-Tu) gene: cDNA sequence, genomic localization, genomic structure, and identification of a pseudogene.</title>
        <authorList>
            <person name="Ling M."/>
            <person name="Merante F."/>
            <person name="Chen H.-S."/>
            <person name="Duff C."/>
            <person name="Duncan A.M.V."/>
            <person name="Robinson B.H."/>
        </authorList>
    </citation>
    <scope>NUCLEOTIDE SEQUENCE [MRNA] OF 2-455</scope>
    <source>
        <tissue>Heart</tissue>
        <tissue>Kidney</tissue>
    </source>
</reference>
<reference key="6">
    <citation type="submission" date="1996-03" db="UniProtKB">
        <authorList>
            <person name="Dunn M.J."/>
        </authorList>
    </citation>
    <scope>PROTEIN SEQUENCE OF 47-57</scope>
    <source>
        <tissue>Heart</tissue>
    </source>
</reference>
<reference key="7">
    <citation type="journal article" date="2003" name="Nat. Biotechnol.">
        <title>Exploring proteomes and analyzing protein processing by mass spectrometric identification of sorted N-terminal peptides.</title>
        <authorList>
            <person name="Gevaert K."/>
            <person name="Goethals M."/>
            <person name="Martens L."/>
            <person name="Van Damme J."/>
            <person name="Staes A."/>
            <person name="Thomas G.R."/>
            <person name="Vandekerckhove J."/>
        </authorList>
    </citation>
    <scope>PROTEIN SEQUENCE OF 47-56</scope>
    <source>
        <tissue>Platelet</tissue>
    </source>
</reference>
<reference key="8">
    <citation type="submission" date="2007-03" db="UniProtKB">
        <authorList>
            <person name="Lubec G."/>
            <person name="Vishwanath V."/>
        </authorList>
    </citation>
    <scope>PROTEIN SEQUENCE OF 242-274</scope>
    <scope>IDENTIFICATION BY MASS SPECTROMETRY</scope>
    <source>
        <tissue>Brain</tissue>
        <tissue>Cajal-Retzius cell</tissue>
    </source>
</reference>
<reference key="9">
    <citation type="submission" date="1997-03" db="EMBL/GenBank/DDBJ databases">
        <title>Human genomic sequences encoding mitochondrial elongation factor EF-Tu: evidence for post-endosymbiotic intron insertion.</title>
        <authorList>
            <person name="Jacobs H.T."/>
            <person name="Smurthwaite L."/>
            <person name="Koshy R."/>
        </authorList>
    </citation>
    <scope>NUCLEOTIDE SEQUENCE [GENOMIC DNA] OF 382-398</scope>
</reference>
<reference key="10">
    <citation type="journal article" date="2003" name="Nature">
        <title>Proteomic characterization of the human centrosome by protein correlation profiling.</title>
        <authorList>
            <person name="Andersen J.S."/>
            <person name="Wilkinson C.J."/>
            <person name="Mayor T."/>
            <person name="Mortensen P."/>
            <person name="Nigg E.A."/>
            <person name="Mann M."/>
        </authorList>
    </citation>
    <scope>IDENTIFICATION BY MASS SPECTROMETRY</scope>
    <source>
        <tissue>Lymphoblast</tissue>
    </source>
</reference>
<reference key="11">
    <citation type="journal article" date="2009" name="Science">
        <title>Lysine acetylation targets protein complexes and co-regulates major cellular functions.</title>
        <authorList>
            <person name="Choudhary C."/>
            <person name="Kumar C."/>
            <person name="Gnad F."/>
            <person name="Nielsen M.L."/>
            <person name="Rehman M."/>
            <person name="Walther T.C."/>
            <person name="Olsen J.V."/>
            <person name="Mann M."/>
        </authorList>
    </citation>
    <scope>ACETYLATION [LARGE SCALE ANALYSIS] AT LYS-82; LYS-91; LYS-259 AND LYS-421</scope>
    <scope>IDENTIFICATION BY MASS SPECTROMETRY [LARGE SCALE ANALYSIS]</scope>
</reference>
<reference key="12">
    <citation type="journal article" date="2011" name="BMC Syst. Biol.">
        <title>Initial characterization of the human central proteome.</title>
        <authorList>
            <person name="Burkard T.R."/>
            <person name="Planyavsky M."/>
            <person name="Kaupe I."/>
            <person name="Breitwieser F.P."/>
            <person name="Buerckstuemmer T."/>
            <person name="Bennett K.L."/>
            <person name="Superti-Furga G."/>
            <person name="Colinge J."/>
        </authorList>
    </citation>
    <scope>IDENTIFICATION BY MASS SPECTROMETRY [LARGE SCALE ANALYSIS]</scope>
</reference>
<reference key="13">
    <citation type="journal article" date="2012" name="Immunity">
        <title>The mitochondrial proteins NLRX1 and TUFM form a complex that regulates type I interferon and autophagy.</title>
        <authorList>
            <person name="Lei Y."/>
            <person name="Wen H."/>
            <person name="Yu Y."/>
            <person name="Taxman D.J."/>
            <person name="Zhang L."/>
            <person name="Widman D.G."/>
            <person name="Swanson K.V."/>
            <person name="Wen K.W."/>
            <person name="Damania B."/>
            <person name="Moore C.B."/>
            <person name="Giguere P.M."/>
            <person name="Siderovski D.P."/>
            <person name="Hiscott J."/>
            <person name="Razani B."/>
            <person name="Semenkovich C.F."/>
            <person name="Chen X."/>
            <person name="Ting J.P."/>
        </authorList>
    </citation>
    <scope>FUNCTION</scope>
    <scope>SUBCELLULAR LOCATION</scope>
    <scope>INTERACTION WITH NLRX1 AND ATG16L1</scope>
</reference>
<reference key="14">
    <citation type="journal article" date="2013" name="J. Proteome Res.">
        <title>Toward a comprehensive characterization of a human cancer cell phosphoproteome.</title>
        <authorList>
            <person name="Zhou H."/>
            <person name="Di Palma S."/>
            <person name="Preisinger C."/>
            <person name="Peng M."/>
            <person name="Polat A.N."/>
            <person name="Heck A.J."/>
            <person name="Mohammed S."/>
        </authorList>
    </citation>
    <scope>PHOSPHORYLATION [LARGE SCALE ANALYSIS] AT THR-281</scope>
    <scope>IDENTIFICATION BY MASS SPECTROMETRY [LARGE SCALE ANALYSIS]</scope>
    <source>
        <tissue>Cervix carcinoma</tissue>
    </source>
</reference>
<reference key="15">
    <citation type="journal article" date="2014" name="J. Proteomics">
        <title>An enzyme assisted RP-RPLC approach for in-depth analysis of human liver phosphoproteome.</title>
        <authorList>
            <person name="Bian Y."/>
            <person name="Song C."/>
            <person name="Cheng K."/>
            <person name="Dong M."/>
            <person name="Wang F."/>
            <person name="Huang J."/>
            <person name="Sun D."/>
            <person name="Wang L."/>
            <person name="Ye M."/>
            <person name="Zou H."/>
        </authorList>
    </citation>
    <scope>IDENTIFICATION BY MASS SPECTROMETRY [LARGE SCALE ANALYSIS]</scope>
    <source>
        <tissue>Liver</tissue>
    </source>
</reference>
<reference key="16">
    <citation type="journal article" date="2015" name="Proteomics">
        <title>N-terminome analysis of the human mitochondrial proteome.</title>
        <authorList>
            <person name="Vaca Jacome A.S."/>
            <person name="Rabilloud T."/>
            <person name="Schaeffer-Reiss C."/>
            <person name="Rompais M."/>
            <person name="Ayoub D."/>
            <person name="Lane L."/>
            <person name="Bairoch A."/>
            <person name="Van Dorsselaer A."/>
            <person name="Carapito C."/>
        </authorList>
    </citation>
    <scope>IDENTIFICATION BY MASS SPECTROMETRY [LARGE SCALE ANALYSIS]</scope>
</reference>
<reference key="17">
    <citation type="journal article" date="2017" name="Cell Host Microbe">
        <title>The Matrix Protein of Human Parainfluenza Virus Type 3 Induces Mitophagy that Suppresses Interferon Responses.</title>
        <authorList>
            <person name="Ding B."/>
            <person name="Zhang L."/>
            <person name="Li Z."/>
            <person name="Zhong Y."/>
            <person name="Tang Q."/>
            <person name="Qin Y."/>
            <person name="Chen M."/>
        </authorList>
    </citation>
    <scope>FUNCTION</scope>
    <scope>INTERACTION WITH HUMAN PARAINFLUENZA VIRUS TYPE 3 MATRIX PROTEIN (MICROBIAL INFECTION)</scope>
</reference>
<reference key="18">
    <citation type="journal article" date="2019" name="Cell Rep.">
        <title>The Glycoprotein and Nucleocapsid Protein of Hantaviruses Manipulate Autophagy Flux to Restrain Host Innate Immune Responses.</title>
        <authorList>
            <person name="Wang K."/>
            <person name="Ma H."/>
            <person name="Liu H."/>
            <person name="Ye W."/>
            <person name="Li Z."/>
            <person name="Cheng L."/>
            <person name="Zhang L."/>
            <person name="Lei Y."/>
            <person name="Shen L."/>
            <person name="Zhang F."/>
        </authorList>
    </citation>
    <scope>INTERACTION WITH HANTAAN HANTAVIRUS GLYCOPROTEIN N (MICROBIAL INFECTION)</scope>
</reference>
<reference key="19">
    <citation type="journal article" date="2007" name="Am. J. Hum. Genet.">
        <title>Infantile encephalopathy and defective mitochondrial DNA translation in patients with mutations of mitochondrial elongation factors EFG1 and EFTu.</title>
        <authorList>
            <person name="Valente L."/>
            <person name="Tiranti V."/>
            <person name="Marsano R.M."/>
            <person name="Malfatti E."/>
            <person name="Fernandez-Vizarra E."/>
            <person name="Donnini C."/>
            <person name="Mereghetti P."/>
            <person name="De Gioia L."/>
            <person name="Burlina A."/>
            <person name="Castellan C."/>
            <person name="Comi G.P."/>
            <person name="Savasta S."/>
            <person name="Ferrero I."/>
            <person name="Zeviani M."/>
        </authorList>
    </citation>
    <scope>VARIANT COXPD4 GLN-339</scope>
</reference>
<comment type="function">
    <text evidence="6 7">GTP hydrolase that promotes the GTP-dependent binding of aminoacyl-tRNA to the A-site of ribosomes during protein biosynthesis. Also plays a role in the regulation of autophagy and innate immunity. Recruits ATG5-ATG12 and NLRX1 at mitochondria and serves as a checkpoint of the RIGI-MAVS pathway. In turn, inhibits RLR-mediated type I interferon while promoting autophagy.</text>
</comment>
<comment type="catalytic activity">
    <reaction evidence="1">
        <text>GTP + H2O = GDP + phosphate + H(+)</text>
        <dbReference type="Rhea" id="RHEA:19669"/>
        <dbReference type="ChEBI" id="CHEBI:15377"/>
        <dbReference type="ChEBI" id="CHEBI:15378"/>
        <dbReference type="ChEBI" id="CHEBI:37565"/>
        <dbReference type="ChEBI" id="CHEBI:43474"/>
        <dbReference type="ChEBI" id="CHEBI:58189"/>
        <dbReference type="EC" id="3.6.5.3"/>
    </reaction>
    <physiologicalReaction direction="left-to-right" evidence="1">
        <dbReference type="Rhea" id="RHEA:19670"/>
    </physiologicalReaction>
</comment>
<comment type="subunit">
    <text evidence="6">Interacts with NLRX1 (PubMed:22749352). Interacts with ATG16L1 (PubMed:22749352).</text>
</comment>
<comment type="subunit">
    <text evidence="7">(Microbial infection) Interacts with human parainfluenza virus 3 matrix protein; this interaction inhibits RLR-mediated type I interferon production while promoting autophagy.</text>
</comment>
<comment type="subunit">
    <text evidence="8">(Microbial infection) Interacts with Hantaan hantavirus glycoprotein N; this interaction contributes to the virus-induced degradation of mitochondria by autophagy, which leads to degradation of MAVS and inhibition of type I interferon (IFN) responses.</text>
</comment>
<comment type="interaction">
    <interactant intactId="EBI-359097">
        <id>P49411</id>
    </interactant>
    <interactant intactId="EBI-714543">
        <id>Q15041</id>
        <label>ARL6IP1</label>
    </interactant>
    <organismsDiffer>false</organismsDiffer>
    <experiments>3</experiments>
</comment>
<comment type="interaction">
    <interactant intactId="EBI-359097">
        <id>P49411</id>
    </interactant>
    <interactant intactId="EBI-2548702">
        <id>Q96DZ9</id>
        <label>CMTM5</label>
    </interactant>
    <organismsDiffer>false</organismsDiffer>
    <experiments>3</experiments>
</comment>
<comment type="interaction">
    <interactant intactId="EBI-359097">
        <id>P49411</id>
    </interactant>
    <interactant intactId="EBI-10175124">
        <id>Q8IZU0</id>
        <label>FAM9B</label>
    </interactant>
    <organismsDiffer>false</organismsDiffer>
    <experiments>4</experiments>
</comment>
<comment type="interaction">
    <interactant intactId="EBI-359097">
        <id>P49411</id>
    </interactant>
    <interactant intactId="EBI-3059266">
        <id>Q8IVP5</id>
        <label>FUNDC1</label>
    </interactant>
    <organismsDiffer>false</organismsDiffer>
    <experiments>3</experiments>
</comment>
<comment type="interaction">
    <interactant intactId="EBI-359097">
        <id>P49411</id>
    </interactant>
    <interactant intactId="EBI-3893071">
        <id>Q86UT6</id>
        <label>NLRX1</label>
    </interactant>
    <organismsDiffer>false</organismsDiffer>
    <experiments>2</experiments>
</comment>
<comment type="interaction">
    <interactant intactId="EBI-359097">
        <id>P49411</id>
    </interactant>
    <interactant intactId="EBI-8430745">
        <id>P03427</id>
        <label>PB2</label>
    </interactant>
    <organismsDiffer>true</organismsDiffer>
    <experiments>9</experiments>
</comment>
<comment type="subcellular location">
    <subcellularLocation>
        <location evidence="6">Mitochondrion</location>
    </subcellularLocation>
</comment>
<comment type="disease" evidence="5">
    <disease id="DI-01367">
        <name>Combined oxidative phosphorylation deficiency 4</name>
        <acronym>COXPD4</acronym>
        <description>A mitochondrial disease resulting in neonatal lactic acidosis, rapidly progressive encephalopathy, severely decreased mitochondrial protein synthesis, and combined deficiency of mtDNA-related mitochondrial respiratory chain complexes.</description>
        <dbReference type="MIM" id="610678"/>
    </disease>
    <text>The disease is caused by variants affecting the gene represented in this entry.</text>
</comment>
<comment type="similarity">
    <text evidence="3">Belongs to the TRAFAC class translation factor GTPase superfamily. Classic translation factor GTPase family. EF-Tu/EF-1A subfamily.</text>
</comment>
<comment type="sequence caution" evidence="11">
    <conflict type="erroneous initiation">
        <sequence resource="EMBL-CDS" id="AAB00499"/>
    </conflict>
    <text>Truncated N-terminus.</text>
</comment>
<comment type="sequence caution" evidence="12">
    <conflict type="erroneous initiation">
        <sequence resource="EMBL-CDS" id="CAA59169"/>
    </conflict>
    <text>Truncated N-terminus.</text>
</comment>
<sequence>MTTMAAATLLRATPHFSGLAAGRTFLLQGLLRLLKAPALPLLCRGLAVEAKKTYVRDKPHVNVGTIGHVDHGKTTLTAAITKILAEGGGAKFKKYEEIDNAPEERARGITINAAHVEYSTAARHYAHTDCPGHADYVKNMITGTAPLDGCILVVAANDGPMPQTREHLLLARQIGVEHVVVYVNKADAVQDSEMVELVELEIRELLTEFGYKGEETPVIVGSALCALEGRDPELGLKSVQKLLDAVDTYIPVPARDLEKPFLLPVEAVYSVPGRGTVVTGTLERGILKKGDECELLGHSKNIRTVVTGIEMFHKSLERAEAGDNLGALVRGLKREDLRRGLVMVKPGSIKPHQKVEAQVYILSKEEGGRHKPFVSHFMPVMFSLTWDMACRIILPPEKELAMPGEDLKFNLILRQPMILEKGQRFTLRDGNRTIGTGLVTNTLAMTEEEKNIKWG</sequence>
<evidence type="ECO:0000250" key="1">
    <source>
        <dbReference type="UniProtKB" id="P0CE47"/>
    </source>
</evidence>
<evidence type="ECO:0000250" key="2">
    <source>
        <dbReference type="UniProtKB" id="Q8BFR5"/>
    </source>
</evidence>
<evidence type="ECO:0000255" key="3">
    <source>
        <dbReference type="PROSITE-ProRule" id="PRU01059"/>
    </source>
</evidence>
<evidence type="ECO:0000269" key="4">
    <source>
    </source>
</evidence>
<evidence type="ECO:0000269" key="5">
    <source>
    </source>
</evidence>
<evidence type="ECO:0000269" key="6">
    <source>
    </source>
</evidence>
<evidence type="ECO:0000269" key="7">
    <source>
    </source>
</evidence>
<evidence type="ECO:0000269" key="8">
    <source>
    </source>
</evidence>
<evidence type="ECO:0000269" key="9">
    <source ref="6"/>
</evidence>
<evidence type="ECO:0000305" key="10"/>
<evidence type="ECO:0000305" key="11">
    <source>
    </source>
</evidence>
<evidence type="ECO:0000305" key="12">
    <source>
    </source>
</evidence>
<evidence type="ECO:0007744" key="13">
    <source>
    </source>
</evidence>
<evidence type="ECO:0007744" key="14">
    <source>
    </source>
</evidence>
<keyword id="KW-0002">3D-structure</keyword>
<keyword id="KW-0007">Acetylation</keyword>
<keyword id="KW-0903">Direct protein sequencing</keyword>
<keyword id="KW-0225">Disease variant</keyword>
<keyword id="KW-0251">Elongation factor</keyword>
<keyword id="KW-0342">GTP-binding</keyword>
<keyword id="KW-0945">Host-virus interaction</keyword>
<keyword id="KW-0378">Hydrolase</keyword>
<keyword id="KW-0460">Magnesium</keyword>
<keyword id="KW-0479">Metal-binding</keyword>
<keyword id="KW-0496">Mitochondrion</keyword>
<keyword id="KW-0547">Nucleotide-binding</keyword>
<keyword id="KW-0597">Phosphoprotein</keyword>
<keyword id="KW-1274">Primary mitochondrial disease</keyword>
<keyword id="KW-0648">Protein biosynthesis</keyword>
<keyword id="KW-1267">Proteomics identification</keyword>
<keyword id="KW-1185">Reference proteome</keyword>
<keyword id="KW-0809">Transit peptide</keyword>
<feature type="transit peptide" description="Mitochondrion" evidence="4 9">
    <location>
        <begin position="1"/>
        <end position="46"/>
    </location>
</feature>
<feature type="chain" id="PRO_0000007462" description="Elongation factor Tu, mitochondrial">
    <location>
        <begin position="47"/>
        <end position="455"/>
    </location>
</feature>
<feature type="domain" description="tr-type G" evidence="3">
    <location>
        <begin position="58"/>
        <end position="254"/>
    </location>
</feature>
<feature type="region of interest" description="G1" evidence="3">
    <location>
        <begin position="67"/>
        <end position="74"/>
    </location>
</feature>
<feature type="region of interest" description="G2" evidence="3">
    <location>
        <begin position="108"/>
        <end position="112"/>
    </location>
</feature>
<feature type="region of interest" description="G3" evidence="3">
    <location>
        <begin position="129"/>
        <end position="132"/>
    </location>
</feature>
<feature type="region of interest" description="G4" evidence="3">
    <location>
        <begin position="184"/>
        <end position="187"/>
    </location>
</feature>
<feature type="region of interest" description="G5" evidence="3">
    <location>
        <begin position="222"/>
        <end position="224"/>
    </location>
</feature>
<feature type="binding site" evidence="1">
    <location>
        <position position="70"/>
    </location>
    <ligand>
        <name>GTP</name>
        <dbReference type="ChEBI" id="CHEBI:37565"/>
    </ligand>
</feature>
<feature type="binding site" evidence="1">
    <location>
        <position position="72"/>
    </location>
    <ligand>
        <name>GTP</name>
        <dbReference type="ChEBI" id="CHEBI:37565"/>
    </ligand>
</feature>
<feature type="binding site" evidence="1">
    <location>
        <position position="73"/>
    </location>
    <ligand>
        <name>GTP</name>
        <dbReference type="ChEBI" id="CHEBI:37565"/>
    </ligand>
</feature>
<feature type="binding site" evidence="1">
    <location>
        <position position="74"/>
    </location>
    <ligand>
        <name>GTP</name>
        <dbReference type="ChEBI" id="CHEBI:37565"/>
    </ligand>
</feature>
<feature type="binding site" evidence="1">
    <location>
        <position position="74"/>
    </location>
    <ligand>
        <name>Mg(2+)</name>
        <dbReference type="ChEBI" id="CHEBI:18420"/>
    </ligand>
</feature>
<feature type="binding site" evidence="1">
    <location>
        <position position="75"/>
    </location>
    <ligand>
        <name>GTP</name>
        <dbReference type="ChEBI" id="CHEBI:37565"/>
    </ligand>
</feature>
<feature type="binding site" evidence="1">
    <location>
        <position position="184"/>
    </location>
    <ligand>
        <name>GTP</name>
        <dbReference type="ChEBI" id="CHEBI:37565"/>
    </ligand>
</feature>
<feature type="binding site" evidence="1">
    <location>
        <position position="187"/>
    </location>
    <ligand>
        <name>GTP</name>
        <dbReference type="ChEBI" id="CHEBI:37565"/>
    </ligand>
</feature>
<feature type="binding site" evidence="1">
    <location>
        <position position="222"/>
    </location>
    <ligand>
        <name>GTP</name>
        <dbReference type="ChEBI" id="CHEBI:37565"/>
    </ligand>
</feature>
<feature type="binding site" evidence="1">
    <location>
        <position position="223"/>
    </location>
    <ligand>
        <name>GTP</name>
        <dbReference type="ChEBI" id="CHEBI:37565"/>
    </ligand>
</feature>
<feature type="binding site" evidence="1">
    <location>
        <position position="224"/>
    </location>
    <ligand>
        <name>GTP</name>
        <dbReference type="ChEBI" id="CHEBI:37565"/>
    </ligand>
</feature>
<feature type="modified residue" description="N6-acetyllysine" evidence="13">
    <location>
        <position position="82"/>
    </location>
</feature>
<feature type="modified residue" description="N6-acetyllysine; alternate" evidence="13">
    <location>
        <position position="91"/>
    </location>
</feature>
<feature type="modified residue" description="N6-succinyllysine; alternate" evidence="2">
    <location>
        <position position="91"/>
    </location>
</feature>
<feature type="modified residue" description="N6-succinyllysine" evidence="2">
    <location>
        <position position="237"/>
    </location>
</feature>
<feature type="modified residue" description="N6-acetyllysine" evidence="13">
    <location>
        <position position="259"/>
    </location>
</feature>
<feature type="modified residue" description="Phosphothreonine" evidence="14">
    <location>
        <position position="281"/>
    </location>
</feature>
<feature type="modified residue" description="N6-succinyllysine" evidence="2">
    <location>
        <position position="289"/>
    </location>
</feature>
<feature type="modified residue" description="Phosphoserine" evidence="2">
    <location>
        <position position="315"/>
    </location>
</feature>
<feature type="modified residue" description="N6-acetyllysine" evidence="2">
    <location>
        <position position="364"/>
    </location>
</feature>
<feature type="modified residue" description="N6-acetyllysine" evidence="13">
    <location>
        <position position="421"/>
    </location>
</feature>
<feature type="sequence variant" id="VAR_031902" description="In COXPD4; dbSNP:rs121434452." evidence="5">
    <original>R</original>
    <variation>Q</variation>
    <location>
        <position position="339"/>
    </location>
</feature>
<feature type="sequence conflict" description="In Ref. 1; AAC60647." evidence="10" ref="1">
    <location>
        <begin position="198"/>
        <end position="200"/>
    </location>
</feature>
<feature type="sequence conflict" description="In Ref. 4; AAB00499 and 9; CAA72493." evidence="10" ref="4 9">
    <original>D</original>
    <variation>N</variation>
    <location>
        <position position="387"/>
    </location>
</feature>
<proteinExistence type="evidence at protein level"/>
<accession>P49411</accession>
<accession>O15276</accession>
<gene>
    <name type="primary">TUFM</name>
</gene>
<name>EFTU_HUMAN</name>
<organism>
    <name type="scientific">Homo sapiens</name>
    <name type="common">Human</name>
    <dbReference type="NCBI Taxonomy" id="9606"/>
    <lineage>
        <taxon>Eukaryota</taxon>
        <taxon>Metazoa</taxon>
        <taxon>Chordata</taxon>
        <taxon>Craniata</taxon>
        <taxon>Vertebrata</taxon>
        <taxon>Euteleostomi</taxon>
        <taxon>Mammalia</taxon>
        <taxon>Eutheria</taxon>
        <taxon>Euarchontoglires</taxon>
        <taxon>Primates</taxon>
        <taxon>Haplorrhini</taxon>
        <taxon>Catarrhini</taxon>
        <taxon>Hominidae</taxon>
        <taxon>Homo</taxon>
    </lineage>
</organism>
<dbReference type="EC" id="3.6.5.3" evidence="1"/>
<dbReference type="EMBL" id="S75463">
    <property type="protein sequence ID" value="AAC60647.1"/>
    <property type="molecule type" value="mRNA"/>
</dbReference>
<dbReference type="EMBL" id="AC133550">
    <property type="status" value="NOT_ANNOTATED_CDS"/>
    <property type="molecule type" value="Genomic_DNA"/>
</dbReference>
<dbReference type="EMBL" id="BC001633">
    <property type="protein sequence ID" value="AAH01633.2"/>
    <property type="molecule type" value="mRNA"/>
</dbReference>
<dbReference type="EMBL" id="BC010041">
    <property type="protein sequence ID" value="AAH10041.2"/>
    <property type="molecule type" value="mRNA"/>
</dbReference>
<dbReference type="EMBL" id="L38995">
    <property type="protein sequence ID" value="AAB00499.1"/>
    <property type="status" value="ALT_INIT"/>
    <property type="molecule type" value="mRNA"/>
</dbReference>
<dbReference type="EMBL" id="X84694">
    <property type="protein sequence ID" value="CAA59169.1"/>
    <property type="status" value="ALT_INIT"/>
    <property type="molecule type" value="mRNA"/>
</dbReference>
<dbReference type="EMBL" id="Y11797">
    <property type="protein sequence ID" value="CAA72493.1"/>
    <property type="molecule type" value="Genomic_DNA"/>
</dbReference>
<dbReference type="CCDS" id="CCDS10642.1"/>
<dbReference type="PIR" id="S62767">
    <property type="entry name" value="S62767"/>
</dbReference>
<dbReference type="PIR" id="S68466">
    <property type="entry name" value="S68466"/>
</dbReference>
<dbReference type="RefSeq" id="NP_003312.3">
    <property type="nucleotide sequence ID" value="NM_003321.4"/>
</dbReference>
<dbReference type="RefSeq" id="XP_016879108.1">
    <property type="nucleotide sequence ID" value="XM_017023619.1"/>
</dbReference>
<dbReference type="RefSeq" id="XP_054169791.1">
    <property type="nucleotide sequence ID" value="XM_054313816.1"/>
</dbReference>
<dbReference type="PDB" id="7A5G">
    <property type="method" value="EM"/>
    <property type="resolution" value="4.33 A"/>
    <property type="chains" value="Z=4-455"/>
</dbReference>
<dbReference type="PDB" id="7O9K">
    <property type="method" value="EM"/>
    <property type="resolution" value="3.10 A"/>
    <property type="chains" value="t=4-455"/>
</dbReference>
<dbReference type="PDBsum" id="7A5G"/>
<dbReference type="PDBsum" id="7O9K"/>
<dbReference type="EMDB" id="EMD-11642"/>
<dbReference type="EMDB" id="EMD-12763"/>
<dbReference type="SMR" id="P49411"/>
<dbReference type="BioGRID" id="113135">
    <property type="interactions" value="729"/>
</dbReference>
<dbReference type="CORUM" id="P49411"/>
<dbReference type="FunCoup" id="P49411">
    <property type="interactions" value="2007"/>
</dbReference>
<dbReference type="IntAct" id="P49411">
    <property type="interactions" value="140"/>
</dbReference>
<dbReference type="MINT" id="P49411"/>
<dbReference type="STRING" id="9606.ENSP00000322439"/>
<dbReference type="ChEMBL" id="CHEMBL4105970"/>
<dbReference type="DrugBank" id="DB04315">
    <property type="generic name" value="Guanosine-5'-Diphosphate"/>
</dbReference>
<dbReference type="DrugBank" id="DB01593">
    <property type="generic name" value="Zinc"/>
</dbReference>
<dbReference type="DrugBank" id="DB14487">
    <property type="generic name" value="Zinc acetate"/>
</dbReference>
<dbReference type="DrugBank" id="DB14533">
    <property type="generic name" value="Zinc chloride"/>
</dbReference>
<dbReference type="DrugBank" id="DB14548">
    <property type="generic name" value="Zinc sulfate, unspecified form"/>
</dbReference>
<dbReference type="DrugCentral" id="P49411"/>
<dbReference type="CarbonylDB" id="P49411"/>
<dbReference type="GlyCosmos" id="P49411">
    <property type="glycosylation" value="2 sites, 1 glycan"/>
</dbReference>
<dbReference type="GlyGen" id="P49411">
    <property type="glycosylation" value="1 site, 1 O-linked glycan (1 site)"/>
</dbReference>
<dbReference type="iPTMnet" id="P49411"/>
<dbReference type="MetOSite" id="P49411"/>
<dbReference type="PhosphoSitePlus" id="P49411"/>
<dbReference type="SwissPalm" id="P49411"/>
<dbReference type="BioMuta" id="TUFM"/>
<dbReference type="DMDM" id="1706611"/>
<dbReference type="OGP" id="P49411"/>
<dbReference type="REPRODUCTION-2DPAGE" id="IPI00027107"/>
<dbReference type="jPOST" id="P49411"/>
<dbReference type="MassIVE" id="P49411"/>
<dbReference type="PaxDb" id="9606-ENSP00000322439"/>
<dbReference type="PeptideAtlas" id="P49411"/>
<dbReference type="ProteomicsDB" id="56003"/>
<dbReference type="Pumba" id="P49411"/>
<dbReference type="TopDownProteomics" id="P49411"/>
<dbReference type="ABCD" id="P49411">
    <property type="antibodies" value="2 sequenced antibodies"/>
</dbReference>
<dbReference type="Antibodypedia" id="13151">
    <property type="antibodies" value="340 antibodies from 30 providers"/>
</dbReference>
<dbReference type="DNASU" id="7284"/>
<dbReference type="Ensembl" id="ENST00000313511.8">
    <property type="protein sequence ID" value="ENSP00000322439.3"/>
    <property type="gene ID" value="ENSG00000178952.11"/>
</dbReference>
<dbReference type="GeneID" id="7284"/>
<dbReference type="KEGG" id="hsa:7284"/>
<dbReference type="MANE-Select" id="ENST00000313511.8">
    <property type="protein sequence ID" value="ENSP00000322439.3"/>
    <property type="RefSeq nucleotide sequence ID" value="NM_003321.5"/>
    <property type="RefSeq protein sequence ID" value="NP_003312.3"/>
</dbReference>
<dbReference type="UCSC" id="uc002drh.2">
    <property type="organism name" value="human"/>
</dbReference>
<dbReference type="AGR" id="HGNC:12420"/>
<dbReference type="CTD" id="7284"/>
<dbReference type="DisGeNET" id="7284"/>
<dbReference type="GeneCards" id="TUFM"/>
<dbReference type="HGNC" id="HGNC:12420">
    <property type="gene designation" value="TUFM"/>
</dbReference>
<dbReference type="HPA" id="ENSG00000178952">
    <property type="expression patterns" value="Low tissue specificity"/>
</dbReference>
<dbReference type="MalaCards" id="TUFM"/>
<dbReference type="MIM" id="602389">
    <property type="type" value="gene"/>
</dbReference>
<dbReference type="MIM" id="610678">
    <property type="type" value="phenotype"/>
</dbReference>
<dbReference type="neXtProt" id="NX_P49411"/>
<dbReference type="OpenTargets" id="ENSG00000178952"/>
<dbReference type="Orphanet" id="254925">
    <property type="disease" value="Combined oxidative phosphorylation defect type 4"/>
</dbReference>
<dbReference type="PharmGKB" id="PA37082"/>
<dbReference type="VEuPathDB" id="HostDB:ENSG00000178952"/>
<dbReference type="eggNOG" id="KOG0460">
    <property type="taxonomic scope" value="Eukaryota"/>
</dbReference>
<dbReference type="GeneTree" id="ENSGT00940000156748"/>
<dbReference type="HOGENOM" id="CLU_007265_0_0_1"/>
<dbReference type="InParanoid" id="P49411"/>
<dbReference type="OMA" id="EGDKEWG"/>
<dbReference type="OrthoDB" id="2067at2759"/>
<dbReference type="PAN-GO" id="P49411">
    <property type="GO annotations" value="3 GO annotations based on evolutionary models"/>
</dbReference>
<dbReference type="PhylomeDB" id="P49411"/>
<dbReference type="TreeFam" id="TF300432"/>
<dbReference type="PathwayCommons" id="P49411"/>
<dbReference type="Reactome" id="R-HSA-5389840">
    <property type="pathway name" value="Mitochondrial translation elongation"/>
</dbReference>
<dbReference type="Reactome" id="R-HSA-9754560">
    <property type="pathway name" value="SARS-CoV-2 modulates autophagy"/>
</dbReference>
<dbReference type="SignaLink" id="P49411"/>
<dbReference type="SIGNOR" id="P49411"/>
<dbReference type="BioGRID-ORCS" id="7284">
    <property type="hits" value="277 hits in 1160 CRISPR screens"/>
</dbReference>
<dbReference type="CD-CODE" id="91857CE7">
    <property type="entry name" value="Nucleolus"/>
</dbReference>
<dbReference type="CD-CODE" id="DEE660B4">
    <property type="entry name" value="Stress granule"/>
</dbReference>
<dbReference type="CD-CODE" id="FB4E32DD">
    <property type="entry name" value="Presynaptic clusters and postsynaptic densities"/>
</dbReference>
<dbReference type="ChiTaRS" id="TUFM">
    <property type="organism name" value="human"/>
</dbReference>
<dbReference type="GeneWiki" id="TUFM"/>
<dbReference type="GenomeRNAi" id="7284"/>
<dbReference type="Pharos" id="P49411">
    <property type="development level" value="Tchem"/>
</dbReference>
<dbReference type="PRO" id="PR:P49411"/>
<dbReference type="Proteomes" id="UP000005640">
    <property type="component" value="Chromosome 16"/>
</dbReference>
<dbReference type="RNAct" id="P49411">
    <property type="molecule type" value="protein"/>
</dbReference>
<dbReference type="Bgee" id="ENSG00000178952">
    <property type="expression patterns" value="Expressed in mucosa of transverse colon and 99 other cell types or tissues"/>
</dbReference>
<dbReference type="ExpressionAtlas" id="P49411">
    <property type="expression patterns" value="baseline and differential"/>
</dbReference>
<dbReference type="GO" id="GO:0070062">
    <property type="term" value="C:extracellular exosome"/>
    <property type="evidence" value="ECO:0007005"/>
    <property type="project" value="UniProtKB"/>
</dbReference>
<dbReference type="GO" id="GO:0016020">
    <property type="term" value="C:membrane"/>
    <property type="evidence" value="ECO:0007005"/>
    <property type="project" value="UniProtKB"/>
</dbReference>
<dbReference type="GO" id="GO:0042645">
    <property type="term" value="C:mitochondrial nucleoid"/>
    <property type="evidence" value="ECO:0000314"/>
    <property type="project" value="BHF-UCL"/>
</dbReference>
<dbReference type="GO" id="GO:0005741">
    <property type="term" value="C:mitochondrial outer membrane"/>
    <property type="evidence" value="ECO:0000304"/>
    <property type="project" value="Reactome"/>
</dbReference>
<dbReference type="GO" id="GO:0005739">
    <property type="term" value="C:mitochondrion"/>
    <property type="evidence" value="ECO:0000314"/>
    <property type="project" value="UniProtKB"/>
</dbReference>
<dbReference type="GO" id="GO:0005525">
    <property type="term" value="F:GTP binding"/>
    <property type="evidence" value="ECO:0000250"/>
    <property type="project" value="UniProtKB"/>
</dbReference>
<dbReference type="GO" id="GO:0003924">
    <property type="term" value="F:GTPase activity"/>
    <property type="evidence" value="ECO:0000250"/>
    <property type="project" value="UniProtKB"/>
</dbReference>
<dbReference type="GO" id="GO:0000287">
    <property type="term" value="F:magnesium ion binding"/>
    <property type="evidence" value="ECO:0000250"/>
    <property type="project" value="UniProtKB"/>
</dbReference>
<dbReference type="GO" id="GO:0003723">
    <property type="term" value="F:RNA binding"/>
    <property type="evidence" value="ECO:0007005"/>
    <property type="project" value="UniProtKB"/>
</dbReference>
<dbReference type="GO" id="GO:0003746">
    <property type="term" value="F:translation elongation factor activity"/>
    <property type="evidence" value="ECO:0000314"/>
    <property type="project" value="UniProtKB"/>
</dbReference>
<dbReference type="GO" id="GO:0070125">
    <property type="term" value="P:mitochondrial translational elongation"/>
    <property type="evidence" value="ECO:0000318"/>
    <property type="project" value="GO_Central"/>
</dbReference>
<dbReference type="GO" id="GO:0006414">
    <property type="term" value="P:translational elongation"/>
    <property type="evidence" value="ECO:0000314"/>
    <property type="project" value="UniProtKB"/>
</dbReference>
<dbReference type="CDD" id="cd01884">
    <property type="entry name" value="EF_Tu"/>
    <property type="match status" value="1"/>
</dbReference>
<dbReference type="CDD" id="cd03697">
    <property type="entry name" value="EFTU_II"/>
    <property type="match status" value="1"/>
</dbReference>
<dbReference type="CDD" id="cd03706">
    <property type="entry name" value="mtEFTU_III"/>
    <property type="match status" value="1"/>
</dbReference>
<dbReference type="FunFam" id="2.40.30.10:FF:000068">
    <property type="entry name" value="Elongation factor Tu"/>
    <property type="match status" value="1"/>
</dbReference>
<dbReference type="FunFam" id="2.40.30.10:FF:000071">
    <property type="entry name" value="Elongation factor Tu"/>
    <property type="match status" value="1"/>
</dbReference>
<dbReference type="FunFam" id="3.40.50.300:FF:000003">
    <property type="entry name" value="Elongation factor Tu"/>
    <property type="match status" value="1"/>
</dbReference>
<dbReference type="Gene3D" id="3.40.50.300">
    <property type="entry name" value="P-loop containing nucleotide triphosphate hydrolases"/>
    <property type="match status" value="1"/>
</dbReference>
<dbReference type="Gene3D" id="2.40.30.10">
    <property type="entry name" value="Translation factors"/>
    <property type="match status" value="2"/>
</dbReference>
<dbReference type="InterPro" id="IPR041709">
    <property type="entry name" value="EF-Tu_GTP-bd"/>
</dbReference>
<dbReference type="InterPro" id="IPR050055">
    <property type="entry name" value="EF-Tu_GTPase"/>
</dbReference>
<dbReference type="InterPro" id="IPR004161">
    <property type="entry name" value="EFTu-like_2"/>
</dbReference>
<dbReference type="InterPro" id="IPR033720">
    <property type="entry name" value="EFTU_2"/>
</dbReference>
<dbReference type="InterPro" id="IPR031157">
    <property type="entry name" value="G_TR_CS"/>
</dbReference>
<dbReference type="InterPro" id="IPR027417">
    <property type="entry name" value="P-loop_NTPase"/>
</dbReference>
<dbReference type="InterPro" id="IPR000795">
    <property type="entry name" value="T_Tr_GTP-bd_dom"/>
</dbReference>
<dbReference type="InterPro" id="IPR009000">
    <property type="entry name" value="Transl_B-barrel_sf"/>
</dbReference>
<dbReference type="InterPro" id="IPR009001">
    <property type="entry name" value="Transl_elong_EF1A/Init_IF2_C"/>
</dbReference>
<dbReference type="InterPro" id="IPR004541">
    <property type="entry name" value="Transl_elong_EFTu/EF1A_bac/org"/>
</dbReference>
<dbReference type="InterPro" id="IPR004160">
    <property type="entry name" value="Transl_elong_EFTu/EF1A_C"/>
</dbReference>
<dbReference type="NCBIfam" id="TIGR00485">
    <property type="entry name" value="EF-Tu"/>
    <property type="match status" value="1"/>
</dbReference>
<dbReference type="NCBIfam" id="NF000766">
    <property type="entry name" value="PRK00049.1"/>
    <property type="match status" value="1"/>
</dbReference>
<dbReference type="NCBIfam" id="NF009372">
    <property type="entry name" value="PRK12735.1"/>
    <property type="match status" value="1"/>
</dbReference>
<dbReference type="NCBIfam" id="NF009373">
    <property type="entry name" value="PRK12736.1"/>
    <property type="match status" value="1"/>
</dbReference>
<dbReference type="PANTHER" id="PTHR43721:SF36">
    <property type="entry name" value="ELONGATION FACTOR TU, MITOCHONDRIAL"/>
    <property type="match status" value="1"/>
</dbReference>
<dbReference type="PANTHER" id="PTHR43721">
    <property type="entry name" value="ELONGATION FACTOR TU-RELATED"/>
    <property type="match status" value="1"/>
</dbReference>
<dbReference type="Pfam" id="PF00009">
    <property type="entry name" value="GTP_EFTU"/>
    <property type="match status" value="1"/>
</dbReference>
<dbReference type="Pfam" id="PF03144">
    <property type="entry name" value="GTP_EFTU_D2"/>
    <property type="match status" value="1"/>
</dbReference>
<dbReference type="Pfam" id="PF03143">
    <property type="entry name" value="GTP_EFTU_D3"/>
    <property type="match status" value="1"/>
</dbReference>
<dbReference type="PRINTS" id="PR00315">
    <property type="entry name" value="ELONGATNFCT"/>
</dbReference>
<dbReference type="SUPFAM" id="SSF50465">
    <property type="entry name" value="EF-Tu/eEF-1alpha/eIF2-gamma C-terminal domain"/>
    <property type="match status" value="1"/>
</dbReference>
<dbReference type="SUPFAM" id="SSF52540">
    <property type="entry name" value="P-loop containing nucleoside triphosphate hydrolases"/>
    <property type="match status" value="1"/>
</dbReference>
<dbReference type="SUPFAM" id="SSF50447">
    <property type="entry name" value="Translation proteins"/>
    <property type="match status" value="1"/>
</dbReference>
<dbReference type="PROSITE" id="PS00301">
    <property type="entry name" value="G_TR_1"/>
    <property type="match status" value="1"/>
</dbReference>
<dbReference type="PROSITE" id="PS51722">
    <property type="entry name" value="G_TR_2"/>
    <property type="match status" value="1"/>
</dbReference>
<protein>
    <recommendedName>
        <fullName>Elongation factor Tu, mitochondrial</fullName>
        <shortName>EF-Tu</shortName>
        <ecNumber evidence="1">3.6.5.3</ecNumber>
    </recommendedName>
    <alternativeName>
        <fullName>P43</fullName>
    </alternativeName>
</protein>